<proteinExistence type="inferred from homology"/>
<organism>
    <name type="scientific">Rickettsia massiliae (strain Mtu5)</name>
    <dbReference type="NCBI Taxonomy" id="416276"/>
    <lineage>
        <taxon>Bacteria</taxon>
        <taxon>Pseudomonadati</taxon>
        <taxon>Pseudomonadota</taxon>
        <taxon>Alphaproteobacteria</taxon>
        <taxon>Rickettsiales</taxon>
        <taxon>Rickettsiaceae</taxon>
        <taxon>Rickettsieae</taxon>
        <taxon>Rickettsia</taxon>
        <taxon>spotted fever group</taxon>
    </lineage>
</organism>
<name>MUTS_RICM5</name>
<protein>
    <recommendedName>
        <fullName evidence="1">DNA mismatch repair protein MutS</fullName>
    </recommendedName>
</protein>
<feature type="chain" id="PRO_0000335218" description="DNA mismatch repair protein MutS">
    <location>
        <begin position="1"/>
        <end position="891"/>
    </location>
</feature>
<feature type="binding site" evidence="1">
    <location>
        <begin position="646"/>
        <end position="653"/>
    </location>
    <ligand>
        <name>ATP</name>
        <dbReference type="ChEBI" id="CHEBI:30616"/>
    </ligand>
</feature>
<comment type="function">
    <text evidence="1">This protein is involved in the repair of mismatches in DNA. It is possible that it carries out the mismatch recognition step. This protein has a weak ATPase activity.</text>
</comment>
<comment type="similarity">
    <text evidence="1">Belongs to the DNA mismatch repair MutS family.</text>
</comment>
<dbReference type="EMBL" id="CP000683">
    <property type="protein sequence ID" value="ABV84650.1"/>
    <property type="molecule type" value="Genomic_DNA"/>
</dbReference>
<dbReference type="SMR" id="A8F164"/>
<dbReference type="KEGG" id="rms:RMA_0410"/>
<dbReference type="HOGENOM" id="CLU_002472_4_0_5"/>
<dbReference type="Proteomes" id="UP000001311">
    <property type="component" value="Chromosome"/>
</dbReference>
<dbReference type="GO" id="GO:0005524">
    <property type="term" value="F:ATP binding"/>
    <property type="evidence" value="ECO:0007669"/>
    <property type="project" value="UniProtKB-UniRule"/>
</dbReference>
<dbReference type="GO" id="GO:0140664">
    <property type="term" value="F:ATP-dependent DNA damage sensor activity"/>
    <property type="evidence" value="ECO:0007669"/>
    <property type="project" value="InterPro"/>
</dbReference>
<dbReference type="GO" id="GO:0003684">
    <property type="term" value="F:damaged DNA binding"/>
    <property type="evidence" value="ECO:0007669"/>
    <property type="project" value="UniProtKB-UniRule"/>
</dbReference>
<dbReference type="GO" id="GO:0030983">
    <property type="term" value="F:mismatched DNA binding"/>
    <property type="evidence" value="ECO:0007669"/>
    <property type="project" value="InterPro"/>
</dbReference>
<dbReference type="GO" id="GO:0006298">
    <property type="term" value="P:mismatch repair"/>
    <property type="evidence" value="ECO:0007669"/>
    <property type="project" value="UniProtKB-UniRule"/>
</dbReference>
<dbReference type="CDD" id="cd03284">
    <property type="entry name" value="ABC_MutS1"/>
    <property type="match status" value="1"/>
</dbReference>
<dbReference type="FunFam" id="3.40.50.300:FF:001238">
    <property type="entry name" value="DNA mismatch repair protein"/>
    <property type="match status" value="1"/>
</dbReference>
<dbReference type="FunFam" id="3.40.1170.10:FF:000001">
    <property type="entry name" value="DNA mismatch repair protein MutS"/>
    <property type="match status" value="1"/>
</dbReference>
<dbReference type="Gene3D" id="1.10.1420.10">
    <property type="match status" value="2"/>
</dbReference>
<dbReference type="Gene3D" id="6.10.140.430">
    <property type="match status" value="1"/>
</dbReference>
<dbReference type="Gene3D" id="3.40.1170.10">
    <property type="entry name" value="DNA repair protein MutS, domain I"/>
    <property type="match status" value="1"/>
</dbReference>
<dbReference type="Gene3D" id="3.30.420.110">
    <property type="entry name" value="MutS, connector domain"/>
    <property type="match status" value="1"/>
</dbReference>
<dbReference type="Gene3D" id="3.40.50.300">
    <property type="entry name" value="P-loop containing nucleotide triphosphate hydrolases"/>
    <property type="match status" value="1"/>
</dbReference>
<dbReference type="HAMAP" id="MF_00096">
    <property type="entry name" value="MutS"/>
    <property type="match status" value="1"/>
</dbReference>
<dbReference type="InterPro" id="IPR005748">
    <property type="entry name" value="DNA_mismatch_repair_MutS"/>
</dbReference>
<dbReference type="InterPro" id="IPR007695">
    <property type="entry name" value="DNA_mismatch_repair_MutS-lik_N"/>
</dbReference>
<dbReference type="InterPro" id="IPR017261">
    <property type="entry name" value="DNA_mismatch_repair_MutS/MSH"/>
</dbReference>
<dbReference type="InterPro" id="IPR000432">
    <property type="entry name" value="DNA_mismatch_repair_MutS_C"/>
</dbReference>
<dbReference type="InterPro" id="IPR007861">
    <property type="entry name" value="DNA_mismatch_repair_MutS_clamp"/>
</dbReference>
<dbReference type="InterPro" id="IPR007696">
    <property type="entry name" value="DNA_mismatch_repair_MutS_core"/>
</dbReference>
<dbReference type="InterPro" id="IPR016151">
    <property type="entry name" value="DNA_mismatch_repair_MutS_N"/>
</dbReference>
<dbReference type="InterPro" id="IPR036187">
    <property type="entry name" value="DNA_mismatch_repair_MutS_sf"/>
</dbReference>
<dbReference type="InterPro" id="IPR007860">
    <property type="entry name" value="DNA_mmatch_repair_MutS_con_dom"/>
</dbReference>
<dbReference type="InterPro" id="IPR045076">
    <property type="entry name" value="MutS"/>
</dbReference>
<dbReference type="InterPro" id="IPR036678">
    <property type="entry name" value="MutS_con_dom_sf"/>
</dbReference>
<dbReference type="InterPro" id="IPR027417">
    <property type="entry name" value="P-loop_NTPase"/>
</dbReference>
<dbReference type="NCBIfam" id="TIGR01070">
    <property type="entry name" value="mutS1"/>
    <property type="match status" value="1"/>
</dbReference>
<dbReference type="NCBIfam" id="NF003810">
    <property type="entry name" value="PRK05399.1"/>
    <property type="match status" value="1"/>
</dbReference>
<dbReference type="PANTHER" id="PTHR11361:SF34">
    <property type="entry name" value="DNA MISMATCH REPAIR PROTEIN MSH1, MITOCHONDRIAL"/>
    <property type="match status" value="1"/>
</dbReference>
<dbReference type="PANTHER" id="PTHR11361">
    <property type="entry name" value="DNA MISMATCH REPAIR PROTEIN MUTS FAMILY MEMBER"/>
    <property type="match status" value="1"/>
</dbReference>
<dbReference type="Pfam" id="PF01624">
    <property type="entry name" value="MutS_I"/>
    <property type="match status" value="1"/>
</dbReference>
<dbReference type="Pfam" id="PF05188">
    <property type="entry name" value="MutS_II"/>
    <property type="match status" value="1"/>
</dbReference>
<dbReference type="Pfam" id="PF05192">
    <property type="entry name" value="MutS_III"/>
    <property type="match status" value="1"/>
</dbReference>
<dbReference type="Pfam" id="PF05190">
    <property type="entry name" value="MutS_IV"/>
    <property type="match status" value="1"/>
</dbReference>
<dbReference type="Pfam" id="PF00488">
    <property type="entry name" value="MutS_V"/>
    <property type="match status" value="1"/>
</dbReference>
<dbReference type="PIRSF" id="PIRSF037677">
    <property type="entry name" value="DNA_mis_repair_Msh6"/>
    <property type="match status" value="1"/>
</dbReference>
<dbReference type="SMART" id="SM00534">
    <property type="entry name" value="MUTSac"/>
    <property type="match status" value="1"/>
</dbReference>
<dbReference type="SMART" id="SM00533">
    <property type="entry name" value="MUTSd"/>
    <property type="match status" value="1"/>
</dbReference>
<dbReference type="SUPFAM" id="SSF55271">
    <property type="entry name" value="DNA repair protein MutS, domain I"/>
    <property type="match status" value="1"/>
</dbReference>
<dbReference type="SUPFAM" id="SSF53150">
    <property type="entry name" value="DNA repair protein MutS, domain II"/>
    <property type="match status" value="1"/>
</dbReference>
<dbReference type="SUPFAM" id="SSF48334">
    <property type="entry name" value="DNA repair protein MutS, domain III"/>
    <property type="match status" value="1"/>
</dbReference>
<dbReference type="SUPFAM" id="SSF52540">
    <property type="entry name" value="P-loop containing nucleoside triphosphate hydrolases"/>
    <property type="match status" value="1"/>
</dbReference>
<dbReference type="PROSITE" id="PS00486">
    <property type="entry name" value="DNA_MISMATCH_REPAIR_2"/>
    <property type="match status" value="1"/>
</dbReference>
<evidence type="ECO:0000255" key="1">
    <source>
        <dbReference type="HAMAP-Rule" id="MF_00096"/>
    </source>
</evidence>
<reference key="1">
    <citation type="journal article" date="2007" name="Genome Res.">
        <title>Lateral gene transfer between obligate intracellular bacteria: evidence from the Rickettsia massiliae genome.</title>
        <authorList>
            <person name="Blanc G."/>
            <person name="Ogata H."/>
            <person name="Robert C."/>
            <person name="Audic S."/>
            <person name="Claverie J.-M."/>
            <person name="Raoult D."/>
        </authorList>
    </citation>
    <scope>NUCLEOTIDE SEQUENCE [LARGE SCALE GENOMIC DNA]</scope>
    <source>
        <strain>Mtu5</strain>
    </source>
</reference>
<gene>
    <name evidence="1" type="primary">mutS</name>
    <name type="ordered locus">RMA_0410</name>
</gene>
<keyword id="KW-0067">ATP-binding</keyword>
<keyword id="KW-0227">DNA damage</keyword>
<keyword id="KW-0234">DNA repair</keyword>
<keyword id="KW-0238">DNA-binding</keyword>
<keyword id="KW-0547">Nucleotide-binding</keyword>
<accession>A8F164</accession>
<sequence length="891" mass="100399">MMLLNMNLQELKQKYNYDVATKMMQQYLDIKFAHLDCLLLFRMGDFYEMFYEDAILASNVLGIALTKRGKNGEEEIAMCGVPYHALENYLTKLIEENYKVAICDQLETPEEAKNRGGYKAVVTRDVTRIITPGTIIEENLIASAEPNYLASLVIPKNKETASLCYVDLSTSEIVVVNVPETEILNELARLKPREILLSENLRSSNLADSIFKQLNFRITYQVDSFFAINKCEKIILDFYKMKDIKGIGEISSSQICAIGSVLEYLSLTQKQNIPHLPIPRIINFHSYMTIDFSTRRNLEIVTNSQGGSQGSLLSTLNHTVTKQGGRLLYNFLSSPLTNIAKINHRLNITEFFYSNLEIVKKIRELLKKTSDIERCLTRITMNRSSGRDLLSIKYTLETATIIKGVFCDAYGVNLPDFIEKIIKPLSGDAELYNLIDETIREDAPNNLNDGGIIKHEYHPKVAQLHDLINNGKLHIDKLKDQYRKETGIDSLKISHNNVIGLFIDITAKNVNKILDPKFIHRQTTVNHVRYTTAELQKLESELVNAKTLVISLEKALYADICSQVIEKASYLRMLASSLNGLDVFCNFAYIADEYDYVKPEFTDALSFDIVKGRHPVVEKALQRESKSFVYNDCHLSELERIWLITGPNMAGKSTFLRQNAIIAIIAQIGSFVPAKSAKIGVVDKIFSRIGAADDLIKGQSTFMAEMLETSAILAQSTKNSLIILDEVGRGTSTYDGVSIAWSVLEYIHDKLKCRCLFATHYHELTVMSNFLPALQNYTIAIEESGKDILFLHNIISGAADRSYGLHVAALAGLPASVINRAKQILLKFEKTSTGKGKNILSMESNNLSLFNLEPNKTTISSKLDEKFSTIDPDKLSPKEALELIYELKKWV</sequence>